<proteinExistence type="evidence at transcript level"/>
<sequence length="351" mass="40190">MNSLTATAPIRAAIPKSYMHIATRNYSGVIAMSGLRCSGSLVANRHQTAGKRFISTTPKSQIKEFFPPPTAPHVKEVETAWVHPVYTEEQMKQVAIAHRDAKNWADWVALGTVRMLRWGMDLVTGYRHPPPGREHEARFKMTEQKWLTRFIFLESVAGVPGMVGGMLRHLRSLRRMKRDNGWIETLLEEAYNERMHLLTFLKLAEPGWFMRLMVLGAQGVFFNGFFLSYLMSPRICHRFVGYLEEEAVITYTRAIKEIEAGSLPAWEKTEAPEIAVQYWKMPEGQRSMKDLLLYVRADEAKHREVNHTLGNLNQAIDPNPYAAKYKDPTKAHPNKGIADLKPTGWEREEVI</sequence>
<organism>
    <name type="scientific">Aspergillus niger</name>
    <dbReference type="NCBI Taxonomy" id="5061"/>
    <lineage>
        <taxon>Eukaryota</taxon>
        <taxon>Fungi</taxon>
        <taxon>Dikarya</taxon>
        <taxon>Ascomycota</taxon>
        <taxon>Pezizomycotina</taxon>
        <taxon>Eurotiomycetes</taxon>
        <taxon>Eurotiomycetidae</taxon>
        <taxon>Eurotiales</taxon>
        <taxon>Aspergillaceae</taxon>
        <taxon>Aspergillus</taxon>
        <taxon>Aspergillus subgen. Circumdati</taxon>
    </lineage>
</organism>
<accession>O74180</accession>
<evidence type="ECO:0000250" key="1"/>
<evidence type="ECO:0000250" key="2">
    <source>
        <dbReference type="UniProtKB" id="Q26710"/>
    </source>
</evidence>
<evidence type="ECO:0000255" key="3"/>
<evidence type="ECO:0000256" key="4">
    <source>
        <dbReference type="SAM" id="MobiDB-lite"/>
    </source>
</evidence>
<evidence type="ECO:0000305" key="5"/>
<protein>
    <recommendedName>
        <fullName>Alternative oxidase, mitochondrial</fullName>
        <ecNumber>1.-.-.-</ecNumber>
    </recommendedName>
</protein>
<keyword id="KW-0249">Electron transport</keyword>
<keyword id="KW-0408">Iron</keyword>
<keyword id="KW-0472">Membrane</keyword>
<keyword id="KW-0479">Metal-binding</keyword>
<keyword id="KW-0496">Mitochondrion</keyword>
<keyword id="KW-0999">Mitochondrion inner membrane</keyword>
<keyword id="KW-0560">Oxidoreductase</keyword>
<keyword id="KW-0679">Respiratory chain</keyword>
<keyword id="KW-0809">Transit peptide</keyword>
<keyword id="KW-0812">Transmembrane</keyword>
<keyword id="KW-1133">Transmembrane helix</keyword>
<keyword id="KW-0813">Transport</keyword>
<comment type="function">
    <text evidence="1">Catalyzes cyanide-resistant oxygen consumption. May increase respiration when the cytochrome respiratory pathway is restricted, or in response to low temperatures (By similarity).</text>
</comment>
<comment type="cofactor">
    <cofactor evidence="2">
        <name>Fe cation</name>
        <dbReference type="ChEBI" id="CHEBI:24875"/>
    </cofactor>
    <text evidence="2">Binds 2 iron ions per subunit.</text>
</comment>
<comment type="subcellular location">
    <subcellularLocation>
        <location evidence="1">Mitochondrion inner membrane</location>
        <topology evidence="1">Multi-pass membrane protein</topology>
        <orientation evidence="1">Matrix side</orientation>
    </subcellularLocation>
</comment>
<comment type="similarity">
    <text evidence="5">Belongs to the alternative oxidase family.</text>
</comment>
<reference key="1">
    <citation type="journal article" date="1999" name="Curr. Genet.">
        <title>Cloning and expression of the cDNA encoding an alternative oxidase gene from Aspergillus niger WU-2223L.</title>
        <authorList>
            <person name="Kirimura K."/>
            <person name="Yoda M."/>
            <person name="Usami S."/>
        </authorList>
    </citation>
    <scope>NUCLEOTIDE SEQUENCE [MRNA]</scope>
    <source>
        <strain>WU-2223L</strain>
    </source>
</reference>
<dbReference type="EC" id="1.-.-.-"/>
<dbReference type="EMBL" id="AB016540">
    <property type="protein sequence ID" value="BAA32033.2"/>
    <property type="molecule type" value="mRNA"/>
</dbReference>
<dbReference type="SMR" id="O74180"/>
<dbReference type="PaxDb" id="5061-CADANGAP00008654"/>
<dbReference type="VEuPathDB" id="FungiDB:An11g04810"/>
<dbReference type="VEuPathDB" id="FungiDB:ASPNIDRAFT2_1035868"/>
<dbReference type="VEuPathDB" id="FungiDB:ATCC64974_90770"/>
<dbReference type="VEuPathDB" id="FungiDB:M747DRAFT_235234"/>
<dbReference type="eggNOG" id="ENOG502QSB5">
    <property type="taxonomic scope" value="Eukaryota"/>
</dbReference>
<dbReference type="OMA" id="VHTYTRA"/>
<dbReference type="OrthoDB" id="16906at2759"/>
<dbReference type="GO" id="GO:0005743">
    <property type="term" value="C:mitochondrial inner membrane"/>
    <property type="evidence" value="ECO:0007669"/>
    <property type="project" value="UniProtKB-SubCell"/>
</dbReference>
<dbReference type="GO" id="GO:0009916">
    <property type="term" value="F:alternative oxidase activity"/>
    <property type="evidence" value="ECO:0007669"/>
    <property type="project" value="InterPro"/>
</dbReference>
<dbReference type="GO" id="GO:0046872">
    <property type="term" value="F:metal ion binding"/>
    <property type="evidence" value="ECO:0007669"/>
    <property type="project" value="UniProtKB-KW"/>
</dbReference>
<dbReference type="GO" id="GO:0010230">
    <property type="term" value="P:alternative respiration"/>
    <property type="evidence" value="ECO:0007669"/>
    <property type="project" value="TreeGrafter"/>
</dbReference>
<dbReference type="CDD" id="cd01053">
    <property type="entry name" value="AOX"/>
    <property type="match status" value="1"/>
</dbReference>
<dbReference type="FunFam" id="1.20.1260.140:FF:000002">
    <property type="entry name" value="Alternative oxidase"/>
    <property type="match status" value="1"/>
</dbReference>
<dbReference type="Gene3D" id="1.20.1260.140">
    <property type="entry name" value="Alternative oxidase"/>
    <property type="match status" value="1"/>
</dbReference>
<dbReference type="InterPro" id="IPR002680">
    <property type="entry name" value="AOX"/>
</dbReference>
<dbReference type="InterPro" id="IPR038659">
    <property type="entry name" value="AOX_sf"/>
</dbReference>
<dbReference type="PANTHER" id="PTHR31803">
    <property type="entry name" value="ALTERNATIVE OXIDASE"/>
    <property type="match status" value="1"/>
</dbReference>
<dbReference type="PANTHER" id="PTHR31803:SF3">
    <property type="entry name" value="ALTERNATIVE OXIDASE"/>
    <property type="match status" value="1"/>
</dbReference>
<dbReference type="Pfam" id="PF01786">
    <property type="entry name" value="AOX"/>
    <property type="match status" value="1"/>
</dbReference>
<dbReference type="PIRSF" id="PIRSF005229">
    <property type="entry name" value="AOX"/>
    <property type="match status" value="1"/>
</dbReference>
<gene>
    <name type="primary">aox1</name>
</gene>
<name>AOX_ASPNG</name>
<feature type="transit peptide" description="Mitochondrion" evidence="3">
    <location>
        <begin position="1"/>
        <end status="unknown"/>
    </location>
</feature>
<feature type="chain" id="PRO_0000001714" description="Alternative oxidase, mitochondrial">
    <location>
        <begin status="unknown"/>
        <end position="351"/>
    </location>
</feature>
<feature type="transmembrane region" description="Helical" evidence="3">
    <location>
        <begin position="147"/>
        <end position="167"/>
    </location>
</feature>
<feature type="transmembrane region" description="Helical" evidence="3">
    <location>
        <begin position="212"/>
        <end position="232"/>
    </location>
</feature>
<feature type="region of interest" description="Disordered" evidence="4">
    <location>
        <begin position="322"/>
        <end position="351"/>
    </location>
</feature>
<feature type="binding site" evidence="2">
    <location>
        <position position="154"/>
    </location>
    <ligand>
        <name>Fe cation</name>
        <dbReference type="ChEBI" id="CHEBI:24875"/>
        <label>1</label>
    </ligand>
</feature>
<feature type="binding site" evidence="3">
    <location>
        <position position="154"/>
    </location>
    <ligand>
        <name>Fe cation</name>
        <dbReference type="ChEBI" id="CHEBI:24875"/>
    </ligand>
</feature>
<feature type="binding site" evidence="2">
    <location>
        <position position="193"/>
    </location>
    <ligand>
        <name>Fe cation</name>
        <dbReference type="ChEBI" id="CHEBI:24875"/>
        <label>1</label>
    </ligand>
</feature>
<feature type="binding site" evidence="2">
    <location>
        <position position="193"/>
    </location>
    <ligand>
        <name>Fe cation</name>
        <dbReference type="ChEBI" id="CHEBI:24875"/>
        <label>2</label>
    </ligand>
</feature>
<feature type="binding site" evidence="3">
    <location>
        <position position="193"/>
    </location>
    <ligand>
        <name>Fe cation</name>
        <dbReference type="ChEBI" id="CHEBI:24875"/>
    </ligand>
</feature>
<feature type="binding site" evidence="2">
    <location>
        <position position="196"/>
    </location>
    <ligand>
        <name>Fe cation</name>
        <dbReference type="ChEBI" id="CHEBI:24875"/>
        <label>1</label>
    </ligand>
</feature>
<feature type="binding site" evidence="3">
    <location>
        <position position="196"/>
    </location>
    <ligand>
        <name>Fe cation</name>
        <dbReference type="ChEBI" id="CHEBI:24875"/>
    </ligand>
</feature>
<feature type="binding site" evidence="2">
    <location>
        <position position="244"/>
    </location>
    <ligand>
        <name>Fe cation</name>
        <dbReference type="ChEBI" id="CHEBI:24875"/>
        <label>2</label>
    </ligand>
</feature>
<feature type="binding site" evidence="3">
    <location>
        <position position="245"/>
    </location>
    <ligand>
        <name>Fe cation</name>
        <dbReference type="ChEBI" id="CHEBI:24875"/>
    </ligand>
</feature>
<feature type="binding site" evidence="2">
    <location>
        <position position="299"/>
    </location>
    <ligand>
        <name>Fe cation</name>
        <dbReference type="ChEBI" id="CHEBI:24875"/>
        <label>1</label>
    </ligand>
</feature>
<feature type="binding site" evidence="2">
    <location>
        <position position="299"/>
    </location>
    <ligand>
        <name>Fe cation</name>
        <dbReference type="ChEBI" id="CHEBI:24875"/>
        <label>2</label>
    </ligand>
</feature>
<feature type="binding site" evidence="3">
    <location>
        <position position="299"/>
    </location>
    <ligand>
        <name>Fe cation</name>
        <dbReference type="ChEBI" id="CHEBI:24875"/>
    </ligand>
</feature>
<feature type="binding site" evidence="2">
    <location>
        <position position="302"/>
    </location>
    <ligand>
        <name>Fe cation</name>
        <dbReference type="ChEBI" id="CHEBI:24875"/>
        <label>2</label>
    </ligand>
</feature>
<feature type="binding site" evidence="3">
    <location>
        <position position="302"/>
    </location>
    <ligand>
        <name>Fe cation</name>
        <dbReference type="ChEBI" id="CHEBI:24875"/>
    </ligand>
</feature>